<keyword id="KW-0025">Alternative splicing</keyword>
<keyword id="KW-0150">Chloroplast</keyword>
<keyword id="KW-0349">Heme</keyword>
<keyword id="KW-0408">Iron</keyword>
<keyword id="KW-0479">Metal-binding</keyword>
<keyword id="KW-0560">Oxidoreductase</keyword>
<keyword id="KW-0602">Photosynthesis</keyword>
<keyword id="KW-0934">Plastid</keyword>
<keyword id="KW-1185">Reference proteome</keyword>
<keyword id="KW-0809">Transit peptide</keyword>
<organism>
    <name type="scientific">Arabidopsis thaliana</name>
    <name type="common">Mouse-ear cress</name>
    <dbReference type="NCBI Taxonomy" id="3702"/>
    <lineage>
        <taxon>Eukaryota</taxon>
        <taxon>Viridiplantae</taxon>
        <taxon>Streptophyta</taxon>
        <taxon>Embryophyta</taxon>
        <taxon>Tracheophyta</taxon>
        <taxon>Spermatophyta</taxon>
        <taxon>Magnoliopsida</taxon>
        <taxon>eudicotyledons</taxon>
        <taxon>Gunneridae</taxon>
        <taxon>Pentapetalae</taxon>
        <taxon>rosids</taxon>
        <taxon>malvids</taxon>
        <taxon>Brassicales</taxon>
        <taxon>Brassicaceae</taxon>
        <taxon>Camelineae</taxon>
        <taxon>Arabidopsis</taxon>
    </lineage>
</organism>
<sequence>MATTRLNPSCHFPASTRLSCESYLGLRTTGRISYARTLTAPRGYLAVKANGGQASVVTAAAITEKQQKKYPGESKGFVEEMRFVAMRLHTKDQAREGEKESRSPEEGPVAKWEPTVEGYLHFLVDSKLVYDTLEGIIDGSNFPTYAGFKNTGLERAESLRKDLEWFKEQGYEIPEPMAPGKTYSEYLKDLAENDPQAFICHFYNIYFAHSAGGQMIGTKVSKKILDNKELEFYKWDGQLSQLLQNVRQKLNKVAEWWTREEKSHCLEETEKSFKFSGEILRLILS</sequence>
<evidence type="ECO:0000250" key="1"/>
<evidence type="ECO:0000250" key="2">
    <source>
        <dbReference type="UniProtKB" id="O48782"/>
    </source>
</evidence>
<evidence type="ECO:0000255" key="3"/>
<evidence type="ECO:0000256" key="4">
    <source>
        <dbReference type="SAM" id="MobiDB-lite"/>
    </source>
</evidence>
<evidence type="ECO:0000269" key="5">
    <source>
    </source>
</evidence>
<evidence type="ECO:0000269" key="6">
    <source>
    </source>
</evidence>
<evidence type="ECO:0000305" key="7"/>
<feature type="transit peptide" description="Chloroplast" evidence="3">
    <location>
        <begin position="1"/>
        <end position="58"/>
    </location>
</feature>
<feature type="chain" id="PRO_0000412187" description="Heme oxygenase 3, chloroplastic">
    <location>
        <begin position="59"/>
        <end position="285"/>
    </location>
</feature>
<feature type="region of interest" description="Disordered" evidence="4">
    <location>
        <begin position="89"/>
        <end position="109"/>
    </location>
</feature>
<feature type="compositionally biased region" description="Basic and acidic residues" evidence="4">
    <location>
        <begin position="89"/>
        <end position="105"/>
    </location>
</feature>
<feature type="binding site" description="axial binding residue" evidence="1">
    <location>
        <position position="89"/>
    </location>
    <ligand>
        <name>heme b</name>
        <dbReference type="ChEBI" id="CHEBI:60344"/>
    </ligand>
    <ligandPart>
        <name>Fe</name>
        <dbReference type="ChEBI" id="CHEBI:18248"/>
    </ligandPart>
</feature>
<feature type="splice variant" id="VSP_041653" description="In isoform 2." evidence="7">
    <original>VSKKILDN</original>
    <variation>LCRYLRRY</variation>
    <location>
        <begin position="220"/>
        <end position="227"/>
    </location>
</feature>
<feature type="splice variant" id="VSP_041654" description="In isoform 2." evidence="7">
    <location>
        <begin position="228"/>
        <end position="285"/>
    </location>
</feature>
<name>HMOX3_ARATH</name>
<gene>
    <name type="primary">HO3</name>
    <name type="ordered locus">At1g69720</name>
    <name type="ORF">T6C23.8</name>
</gene>
<dbReference type="EC" id="1.14.14.18" evidence="2"/>
<dbReference type="EMBL" id="AF320022">
    <property type="protein sequence ID" value="AAK63006.1"/>
    <property type="molecule type" value="Genomic_DNA"/>
</dbReference>
<dbReference type="EMBL" id="AC013289">
    <property type="protein sequence ID" value="AAG52552.1"/>
    <property type="molecule type" value="Genomic_DNA"/>
</dbReference>
<dbReference type="EMBL" id="CP002684">
    <property type="protein sequence ID" value="AEE34966.1"/>
    <property type="molecule type" value="Genomic_DNA"/>
</dbReference>
<dbReference type="EMBL" id="CP002684">
    <property type="protein sequence ID" value="AEE34967.1"/>
    <property type="molecule type" value="Genomic_DNA"/>
</dbReference>
<dbReference type="EMBL" id="CP002684">
    <property type="protein sequence ID" value="ANM59442.1"/>
    <property type="molecule type" value="Genomic_DNA"/>
</dbReference>
<dbReference type="EMBL" id="AY084250">
    <property type="protein sequence ID" value="AAM60844.1"/>
    <property type="molecule type" value="mRNA"/>
</dbReference>
<dbReference type="PIR" id="B96719">
    <property type="entry name" value="B96719"/>
</dbReference>
<dbReference type="RefSeq" id="NP_001117574.1">
    <molecule id="Q9C9L4-2"/>
    <property type="nucleotide sequence ID" value="NM_001124102.1"/>
</dbReference>
<dbReference type="RefSeq" id="NP_001321799.1">
    <molecule id="Q9C9L4-1"/>
    <property type="nucleotide sequence ID" value="NM_001334420.1"/>
</dbReference>
<dbReference type="RefSeq" id="NP_177130.1">
    <molecule id="Q9C9L4-1"/>
    <property type="nucleotide sequence ID" value="NM_105640.4"/>
</dbReference>
<dbReference type="SMR" id="Q9C9L4"/>
<dbReference type="FunCoup" id="Q9C9L4">
    <property type="interactions" value="16"/>
</dbReference>
<dbReference type="STRING" id="3702.Q9C9L4"/>
<dbReference type="PaxDb" id="3702-AT1G69720.1"/>
<dbReference type="ProteomicsDB" id="232100">
    <molecule id="Q9C9L4-1"/>
</dbReference>
<dbReference type="EnsemblPlants" id="AT1G69720.1">
    <molecule id="Q9C9L4-1"/>
    <property type="protein sequence ID" value="AT1G69720.1"/>
    <property type="gene ID" value="AT1G69720"/>
</dbReference>
<dbReference type="EnsemblPlants" id="AT1G69720.2">
    <molecule id="Q9C9L4-2"/>
    <property type="protein sequence ID" value="AT1G69720.2"/>
    <property type="gene ID" value="AT1G69720"/>
</dbReference>
<dbReference type="EnsemblPlants" id="AT1G69720.3">
    <molecule id="Q9C9L4-1"/>
    <property type="protein sequence ID" value="AT1G69720.3"/>
    <property type="gene ID" value="AT1G69720"/>
</dbReference>
<dbReference type="GeneID" id="843308"/>
<dbReference type="Gramene" id="AT1G69720.1">
    <molecule id="Q9C9L4-1"/>
    <property type="protein sequence ID" value="AT1G69720.1"/>
    <property type="gene ID" value="AT1G69720"/>
</dbReference>
<dbReference type="Gramene" id="AT1G69720.2">
    <molecule id="Q9C9L4-2"/>
    <property type="protein sequence ID" value="AT1G69720.2"/>
    <property type="gene ID" value="AT1G69720"/>
</dbReference>
<dbReference type="Gramene" id="AT1G69720.3">
    <molecule id="Q9C9L4-1"/>
    <property type="protein sequence ID" value="AT1G69720.3"/>
    <property type="gene ID" value="AT1G69720"/>
</dbReference>
<dbReference type="KEGG" id="ath:AT1G69720"/>
<dbReference type="Araport" id="AT1G69720"/>
<dbReference type="TAIR" id="AT1G69720">
    <property type="gene designation" value="HO3"/>
</dbReference>
<dbReference type="eggNOG" id="KOG4480">
    <property type="taxonomic scope" value="Eukaryota"/>
</dbReference>
<dbReference type="HOGENOM" id="CLU_063325_1_1_1"/>
<dbReference type="InParanoid" id="Q9C9L4"/>
<dbReference type="OMA" id="QMIGREV"/>
<dbReference type="PhylomeDB" id="Q9C9L4"/>
<dbReference type="BioCyc" id="ARA:AT1G69720-MONOMER"/>
<dbReference type="BioCyc" id="MetaCyc:AT1G69720-MONOMER"/>
<dbReference type="PRO" id="PR:Q9C9L4"/>
<dbReference type="Proteomes" id="UP000006548">
    <property type="component" value="Chromosome 1"/>
</dbReference>
<dbReference type="ExpressionAtlas" id="Q9C9L4">
    <property type="expression patterns" value="baseline and differential"/>
</dbReference>
<dbReference type="GO" id="GO:0009507">
    <property type="term" value="C:chloroplast"/>
    <property type="evidence" value="ECO:0000314"/>
    <property type="project" value="TAIR"/>
</dbReference>
<dbReference type="GO" id="GO:0020037">
    <property type="term" value="F:heme binding"/>
    <property type="evidence" value="ECO:0000314"/>
    <property type="project" value="TAIR"/>
</dbReference>
<dbReference type="GO" id="GO:0004392">
    <property type="term" value="F:heme oxygenase (decyclizing) activity"/>
    <property type="evidence" value="ECO:0000314"/>
    <property type="project" value="TAIR"/>
</dbReference>
<dbReference type="GO" id="GO:0046872">
    <property type="term" value="F:metal ion binding"/>
    <property type="evidence" value="ECO:0007669"/>
    <property type="project" value="UniProtKB-KW"/>
</dbReference>
<dbReference type="GO" id="GO:0006788">
    <property type="term" value="P:heme oxidation"/>
    <property type="evidence" value="ECO:0007669"/>
    <property type="project" value="InterPro"/>
</dbReference>
<dbReference type="GO" id="GO:0015979">
    <property type="term" value="P:photosynthesis"/>
    <property type="evidence" value="ECO:0007669"/>
    <property type="project" value="UniProtKB-KW"/>
</dbReference>
<dbReference type="CDD" id="cd19165">
    <property type="entry name" value="HemeO"/>
    <property type="match status" value="1"/>
</dbReference>
<dbReference type="FunFam" id="1.20.910.10:FF:000005">
    <property type="entry name" value="Heme oxygenase 1"/>
    <property type="match status" value="1"/>
</dbReference>
<dbReference type="Gene3D" id="1.20.910.10">
    <property type="entry name" value="Heme oxygenase-like"/>
    <property type="match status" value="1"/>
</dbReference>
<dbReference type="InterPro" id="IPR002051">
    <property type="entry name" value="Haem_Oase"/>
</dbReference>
<dbReference type="InterPro" id="IPR016053">
    <property type="entry name" value="Haem_Oase-like"/>
</dbReference>
<dbReference type="InterPro" id="IPR016084">
    <property type="entry name" value="Haem_Oase-like_multi-hlx"/>
</dbReference>
<dbReference type="InterPro" id="IPR016951">
    <property type="entry name" value="Haem_Oase_decyc_pln"/>
</dbReference>
<dbReference type="PANTHER" id="PTHR35703">
    <property type="entry name" value="HEME OXYGENASE 1, CHLOROPLASTIC-RELATED"/>
    <property type="match status" value="1"/>
</dbReference>
<dbReference type="PANTHER" id="PTHR35703:SF2">
    <property type="entry name" value="HEME OXYGENASE 1, CHLOROPLASTIC-RELATED"/>
    <property type="match status" value="1"/>
</dbReference>
<dbReference type="Pfam" id="PF01126">
    <property type="entry name" value="Heme_oxygenase"/>
    <property type="match status" value="1"/>
</dbReference>
<dbReference type="PIRSF" id="PIRSF030219">
    <property type="entry name" value="Heme_Oase_decyc_pln"/>
    <property type="match status" value="1"/>
</dbReference>
<dbReference type="SUPFAM" id="SSF48613">
    <property type="entry name" value="Heme oxygenase-like"/>
    <property type="match status" value="1"/>
</dbReference>
<proteinExistence type="evidence at protein level"/>
<protein>
    <recommendedName>
        <fullName>Heme oxygenase 3, chloroplastic</fullName>
        <ecNumber evidence="2">1.14.14.18</ecNumber>
    </recommendedName>
</protein>
<comment type="function">
    <text evidence="5 6">Catalyzes the opening of the heme ring to form the open-chain tetrapyrrole biliverdin IX with the release of iron and carbon monoxide (CO). Produces specifically the biliverdin IX-alpha isomer. Plays a minor role in phytochrome assembly and photomorphogenesis.</text>
</comment>
<comment type="catalytic activity">
    <reaction evidence="2">
        <text>heme b + 3 reduced [NADPH--hemoprotein reductase] + 3 O2 = biliverdin IXalpha + CO + Fe(2+) + 3 oxidized [NADPH--hemoprotein reductase] + 3 H2O + H(+)</text>
        <dbReference type="Rhea" id="RHEA:21764"/>
        <dbReference type="Rhea" id="RHEA-COMP:11964"/>
        <dbReference type="Rhea" id="RHEA-COMP:11965"/>
        <dbReference type="ChEBI" id="CHEBI:15377"/>
        <dbReference type="ChEBI" id="CHEBI:15378"/>
        <dbReference type="ChEBI" id="CHEBI:15379"/>
        <dbReference type="ChEBI" id="CHEBI:17245"/>
        <dbReference type="ChEBI" id="CHEBI:29033"/>
        <dbReference type="ChEBI" id="CHEBI:57618"/>
        <dbReference type="ChEBI" id="CHEBI:57991"/>
        <dbReference type="ChEBI" id="CHEBI:58210"/>
        <dbReference type="ChEBI" id="CHEBI:60344"/>
        <dbReference type="EC" id="1.14.14.18"/>
    </reaction>
</comment>
<comment type="biophysicochemical properties">
    <phDependence>
        <text evidence="6">Optimum pH is 7.0.</text>
    </phDependence>
</comment>
<comment type="subcellular location">
    <subcellularLocation>
        <location evidence="6">Plastid</location>
        <location evidence="6">Chloroplast</location>
    </subcellularLocation>
</comment>
<comment type="alternative products">
    <event type="alternative splicing"/>
    <isoform>
        <id>Q9C9L4-1</id>
        <name>1</name>
        <sequence type="displayed"/>
    </isoform>
    <isoform>
        <id>Q9C9L4-2</id>
        <name>2</name>
        <sequence type="described" ref="VSP_041653 VSP_041654"/>
    </isoform>
</comment>
<comment type="tissue specificity">
    <text evidence="5">Widely expressed at low levels.</text>
</comment>
<comment type="disruption phenotype">
    <text evidence="5">No visible phenotype under normal growth conditions.</text>
</comment>
<comment type="similarity">
    <text evidence="7">Belongs to the heme oxygenase family.</text>
</comment>
<reference key="1">
    <citation type="journal article" date="2001" name="Plant Physiol.">
        <title>The heme-oxygenase family required for phytochrome chromophore biosynthesis is necessary for proper photomorphogenesis in higher plants.</title>
        <authorList>
            <person name="Davis S.J."/>
            <person name="Bhoo S.H."/>
            <person name="Durski A.M."/>
            <person name="Walker J.M."/>
            <person name="Vierstra R.D."/>
        </authorList>
    </citation>
    <scope>NUCLEOTIDE SEQUENCE [GENOMIC DNA]</scope>
</reference>
<reference key="2">
    <citation type="journal article" date="2000" name="Nature">
        <title>Sequence and analysis of chromosome 1 of the plant Arabidopsis thaliana.</title>
        <authorList>
            <person name="Theologis A."/>
            <person name="Ecker J.R."/>
            <person name="Palm C.J."/>
            <person name="Federspiel N.A."/>
            <person name="Kaul S."/>
            <person name="White O."/>
            <person name="Alonso J."/>
            <person name="Altafi H."/>
            <person name="Araujo R."/>
            <person name="Bowman C.L."/>
            <person name="Brooks S.Y."/>
            <person name="Buehler E."/>
            <person name="Chan A."/>
            <person name="Chao Q."/>
            <person name="Chen H."/>
            <person name="Cheuk R.F."/>
            <person name="Chin C.W."/>
            <person name="Chung M.K."/>
            <person name="Conn L."/>
            <person name="Conway A.B."/>
            <person name="Conway A.R."/>
            <person name="Creasy T.H."/>
            <person name="Dewar K."/>
            <person name="Dunn P."/>
            <person name="Etgu P."/>
            <person name="Feldblyum T.V."/>
            <person name="Feng J.-D."/>
            <person name="Fong B."/>
            <person name="Fujii C.Y."/>
            <person name="Gill J.E."/>
            <person name="Goldsmith A.D."/>
            <person name="Haas B."/>
            <person name="Hansen N.F."/>
            <person name="Hughes B."/>
            <person name="Huizar L."/>
            <person name="Hunter J.L."/>
            <person name="Jenkins J."/>
            <person name="Johnson-Hopson C."/>
            <person name="Khan S."/>
            <person name="Khaykin E."/>
            <person name="Kim C.J."/>
            <person name="Koo H.L."/>
            <person name="Kremenetskaia I."/>
            <person name="Kurtz D.B."/>
            <person name="Kwan A."/>
            <person name="Lam B."/>
            <person name="Langin-Hooper S."/>
            <person name="Lee A."/>
            <person name="Lee J.M."/>
            <person name="Lenz C.A."/>
            <person name="Li J.H."/>
            <person name="Li Y.-P."/>
            <person name="Lin X."/>
            <person name="Liu S.X."/>
            <person name="Liu Z.A."/>
            <person name="Luros J.S."/>
            <person name="Maiti R."/>
            <person name="Marziali A."/>
            <person name="Militscher J."/>
            <person name="Miranda M."/>
            <person name="Nguyen M."/>
            <person name="Nierman W.C."/>
            <person name="Osborne B.I."/>
            <person name="Pai G."/>
            <person name="Peterson J."/>
            <person name="Pham P.K."/>
            <person name="Rizzo M."/>
            <person name="Rooney T."/>
            <person name="Rowley D."/>
            <person name="Sakano H."/>
            <person name="Salzberg S.L."/>
            <person name="Schwartz J.R."/>
            <person name="Shinn P."/>
            <person name="Southwick A.M."/>
            <person name="Sun H."/>
            <person name="Tallon L.J."/>
            <person name="Tambunga G."/>
            <person name="Toriumi M.J."/>
            <person name="Town C.D."/>
            <person name="Utterback T."/>
            <person name="Van Aken S."/>
            <person name="Vaysberg M."/>
            <person name="Vysotskaia V.S."/>
            <person name="Walker M."/>
            <person name="Wu D."/>
            <person name="Yu G."/>
            <person name="Fraser C.M."/>
            <person name="Venter J.C."/>
            <person name="Davis R.W."/>
        </authorList>
    </citation>
    <scope>NUCLEOTIDE SEQUENCE [LARGE SCALE GENOMIC DNA]</scope>
    <source>
        <strain>cv. Columbia</strain>
    </source>
</reference>
<reference key="3">
    <citation type="journal article" date="2017" name="Plant J.">
        <title>Araport11: a complete reannotation of the Arabidopsis thaliana reference genome.</title>
        <authorList>
            <person name="Cheng C.Y."/>
            <person name="Krishnakumar V."/>
            <person name="Chan A.P."/>
            <person name="Thibaud-Nissen F."/>
            <person name="Schobel S."/>
            <person name="Town C.D."/>
        </authorList>
    </citation>
    <scope>GENOME REANNOTATION</scope>
    <source>
        <strain>cv. Columbia</strain>
    </source>
</reference>
<reference key="4">
    <citation type="submission" date="2002-03" db="EMBL/GenBank/DDBJ databases">
        <title>Full-length cDNA from Arabidopsis thaliana.</title>
        <authorList>
            <person name="Brover V.V."/>
            <person name="Troukhan M.E."/>
            <person name="Alexandrov N.A."/>
            <person name="Lu Y.-P."/>
            <person name="Flavell R.B."/>
            <person name="Feldmann K.A."/>
        </authorList>
    </citation>
    <scope>NUCLEOTIDE SEQUENCE [LARGE SCALE MRNA] (ISOFORM 1)</scope>
</reference>
<reference key="5">
    <citation type="journal article" date="2006" name="Plant Physiol.">
        <title>Multiple heme oxygenase family members contribute to the biosynthesis of the phytochrome chromophore in Arabidopsis.</title>
        <authorList>
            <person name="Emborg T.J."/>
            <person name="Walker J.M."/>
            <person name="Noh B."/>
            <person name="Vierstra R.D."/>
        </authorList>
    </citation>
    <scope>FUNCTION</scope>
    <scope>TISSUE SPECIFICITY</scope>
    <scope>DISRUPTION PHENOTYPE</scope>
</reference>
<reference key="6">
    <citation type="journal article" date="2010" name="Biochem. J.">
        <title>Characterization of the haem oxygenase protein family in Arabidopsis thaliana reveals a diversity of functions.</title>
        <authorList>
            <person name="Gisk B."/>
            <person name="Yasui Y."/>
            <person name="Kohchi T."/>
            <person name="Frankenberg-Dinkel N."/>
        </authorList>
    </citation>
    <scope>FUNCTION</scope>
    <scope>SUBCELLULAR LOCATION</scope>
    <scope>BIOPHYSICOCHEMICAL PROPERTIES</scope>
</reference>
<accession>Q9C9L4</accession>
<accession>B3H531</accession>